<proteinExistence type="inferred from homology"/>
<gene>
    <name evidence="1" type="primary">purM</name>
    <name type="ordered locus">EcSMS35_2647</name>
</gene>
<reference key="1">
    <citation type="journal article" date="2008" name="J. Bacteriol.">
        <title>Insights into the environmental resistance gene pool from the genome sequence of the multidrug-resistant environmental isolate Escherichia coli SMS-3-5.</title>
        <authorList>
            <person name="Fricke W.F."/>
            <person name="Wright M.S."/>
            <person name="Lindell A.H."/>
            <person name="Harkins D.M."/>
            <person name="Baker-Austin C."/>
            <person name="Ravel J."/>
            <person name="Stepanauskas R."/>
        </authorList>
    </citation>
    <scope>NUCLEOTIDE SEQUENCE [LARGE SCALE GENOMIC DNA]</scope>
    <source>
        <strain>SMS-3-5 / SECEC</strain>
    </source>
</reference>
<evidence type="ECO:0000255" key="1">
    <source>
        <dbReference type="HAMAP-Rule" id="MF_00741"/>
    </source>
</evidence>
<feature type="chain" id="PRO_1000193017" description="Phosphoribosylformylglycinamidine cyclo-ligase">
    <location>
        <begin position="1"/>
        <end position="345"/>
    </location>
</feature>
<keyword id="KW-0067">ATP-binding</keyword>
<keyword id="KW-0963">Cytoplasm</keyword>
<keyword id="KW-0436">Ligase</keyword>
<keyword id="KW-0547">Nucleotide-binding</keyword>
<keyword id="KW-0658">Purine biosynthesis</keyword>
<dbReference type="EC" id="6.3.3.1" evidence="1"/>
<dbReference type="EMBL" id="CP000970">
    <property type="protein sequence ID" value="ACB16617.1"/>
    <property type="molecule type" value="Genomic_DNA"/>
</dbReference>
<dbReference type="RefSeq" id="WP_001295474.1">
    <property type="nucleotide sequence ID" value="NC_010498.1"/>
</dbReference>
<dbReference type="SMR" id="B1LNF0"/>
<dbReference type="GeneID" id="93774637"/>
<dbReference type="KEGG" id="ecm:EcSMS35_2647"/>
<dbReference type="HOGENOM" id="CLU_047116_0_0_6"/>
<dbReference type="UniPathway" id="UPA00074">
    <property type="reaction ID" value="UER00129"/>
</dbReference>
<dbReference type="Proteomes" id="UP000007011">
    <property type="component" value="Chromosome"/>
</dbReference>
<dbReference type="GO" id="GO:0005829">
    <property type="term" value="C:cytosol"/>
    <property type="evidence" value="ECO:0007669"/>
    <property type="project" value="TreeGrafter"/>
</dbReference>
<dbReference type="GO" id="GO:0005524">
    <property type="term" value="F:ATP binding"/>
    <property type="evidence" value="ECO:0007669"/>
    <property type="project" value="UniProtKB-KW"/>
</dbReference>
<dbReference type="GO" id="GO:0004637">
    <property type="term" value="F:phosphoribosylamine-glycine ligase activity"/>
    <property type="evidence" value="ECO:0007669"/>
    <property type="project" value="TreeGrafter"/>
</dbReference>
<dbReference type="GO" id="GO:0004641">
    <property type="term" value="F:phosphoribosylformylglycinamidine cyclo-ligase activity"/>
    <property type="evidence" value="ECO:0007669"/>
    <property type="project" value="UniProtKB-UniRule"/>
</dbReference>
<dbReference type="GO" id="GO:0006189">
    <property type="term" value="P:'de novo' IMP biosynthetic process"/>
    <property type="evidence" value="ECO:0007669"/>
    <property type="project" value="UniProtKB-UniRule"/>
</dbReference>
<dbReference type="GO" id="GO:0046084">
    <property type="term" value="P:adenine biosynthetic process"/>
    <property type="evidence" value="ECO:0007669"/>
    <property type="project" value="TreeGrafter"/>
</dbReference>
<dbReference type="CDD" id="cd02196">
    <property type="entry name" value="PurM"/>
    <property type="match status" value="1"/>
</dbReference>
<dbReference type="FunFam" id="3.30.1330.10:FF:000001">
    <property type="entry name" value="Phosphoribosylformylglycinamidine cyclo-ligase"/>
    <property type="match status" value="1"/>
</dbReference>
<dbReference type="FunFam" id="3.90.650.10:FF:000001">
    <property type="entry name" value="Phosphoribosylformylglycinamidine cyclo-ligase"/>
    <property type="match status" value="1"/>
</dbReference>
<dbReference type="Gene3D" id="3.90.650.10">
    <property type="entry name" value="PurM-like C-terminal domain"/>
    <property type="match status" value="1"/>
</dbReference>
<dbReference type="Gene3D" id="3.30.1330.10">
    <property type="entry name" value="PurM-like, N-terminal domain"/>
    <property type="match status" value="1"/>
</dbReference>
<dbReference type="HAMAP" id="MF_00741">
    <property type="entry name" value="AIRS"/>
    <property type="match status" value="1"/>
</dbReference>
<dbReference type="InterPro" id="IPR010918">
    <property type="entry name" value="PurM-like_C_dom"/>
</dbReference>
<dbReference type="InterPro" id="IPR036676">
    <property type="entry name" value="PurM-like_C_sf"/>
</dbReference>
<dbReference type="InterPro" id="IPR016188">
    <property type="entry name" value="PurM-like_N"/>
</dbReference>
<dbReference type="InterPro" id="IPR036921">
    <property type="entry name" value="PurM-like_N_sf"/>
</dbReference>
<dbReference type="InterPro" id="IPR004733">
    <property type="entry name" value="PurM_cligase"/>
</dbReference>
<dbReference type="NCBIfam" id="TIGR00878">
    <property type="entry name" value="purM"/>
    <property type="match status" value="1"/>
</dbReference>
<dbReference type="PANTHER" id="PTHR10520:SF12">
    <property type="entry name" value="TRIFUNCTIONAL PURINE BIOSYNTHETIC PROTEIN ADENOSINE-3"/>
    <property type="match status" value="1"/>
</dbReference>
<dbReference type="PANTHER" id="PTHR10520">
    <property type="entry name" value="TRIFUNCTIONAL PURINE BIOSYNTHETIC PROTEIN ADENOSINE-3-RELATED"/>
    <property type="match status" value="1"/>
</dbReference>
<dbReference type="Pfam" id="PF00586">
    <property type="entry name" value="AIRS"/>
    <property type="match status" value="1"/>
</dbReference>
<dbReference type="Pfam" id="PF02769">
    <property type="entry name" value="AIRS_C"/>
    <property type="match status" value="1"/>
</dbReference>
<dbReference type="SUPFAM" id="SSF56042">
    <property type="entry name" value="PurM C-terminal domain-like"/>
    <property type="match status" value="1"/>
</dbReference>
<dbReference type="SUPFAM" id="SSF55326">
    <property type="entry name" value="PurM N-terminal domain-like"/>
    <property type="match status" value="1"/>
</dbReference>
<accession>B1LNF0</accession>
<comment type="catalytic activity">
    <reaction evidence="1">
        <text>2-formamido-N(1)-(5-O-phospho-beta-D-ribosyl)acetamidine + ATP = 5-amino-1-(5-phospho-beta-D-ribosyl)imidazole + ADP + phosphate + H(+)</text>
        <dbReference type="Rhea" id="RHEA:23032"/>
        <dbReference type="ChEBI" id="CHEBI:15378"/>
        <dbReference type="ChEBI" id="CHEBI:30616"/>
        <dbReference type="ChEBI" id="CHEBI:43474"/>
        <dbReference type="ChEBI" id="CHEBI:137981"/>
        <dbReference type="ChEBI" id="CHEBI:147287"/>
        <dbReference type="ChEBI" id="CHEBI:456216"/>
        <dbReference type="EC" id="6.3.3.1"/>
    </reaction>
</comment>
<comment type="pathway">
    <text evidence="1">Purine metabolism; IMP biosynthesis via de novo pathway; 5-amino-1-(5-phospho-D-ribosyl)imidazole from N(2)-formyl-N(1)-(5-phospho-D-ribosyl)glycinamide: step 2/2.</text>
</comment>
<comment type="subcellular location">
    <subcellularLocation>
        <location evidence="1">Cytoplasm</location>
    </subcellularLocation>
</comment>
<comment type="similarity">
    <text evidence="1">Belongs to the AIR synthase family.</text>
</comment>
<protein>
    <recommendedName>
        <fullName evidence="1">Phosphoribosylformylglycinamidine cyclo-ligase</fullName>
        <ecNumber evidence="1">6.3.3.1</ecNumber>
    </recommendedName>
    <alternativeName>
        <fullName evidence="1">AIR synthase</fullName>
    </alternativeName>
    <alternativeName>
        <fullName evidence="1">AIRS</fullName>
    </alternativeName>
    <alternativeName>
        <fullName evidence="1">Phosphoribosyl-aminoimidazole synthetase</fullName>
    </alternativeName>
</protein>
<organism>
    <name type="scientific">Escherichia coli (strain SMS-3-5 / SECEC)</name>
    <dbReference type="NCBI Taxonomy" id="439855"/>
    <lineage>
        <taxon>Bacteria</taxon>
        <taxon>Pseudomonadati</taxon>
        <taxon>Pseudomonadota</taxon>
        <taxon>Gammaproteobacteria</taxon>
        <taxon>Enterobacterales</taxon>
        <taxon>Enterobacteriaceae</taxon>
        <taxon>Escherichia</taxon>
    </lineage>
</organism>
<name>PUR5_ECOSM</name>
<sequence>MTDKTSLSYKDAGVDIDAGNALVGRIKGVVKKTRRPEVMGGLGGFGALCALPQKYREPVLVSGTDGVGTKLRLAMDLKRHDTIGIDLVAMCVNDLVVQGAEPLFFLDYYATGKLDVDTASAVISGIAEGCLQSGCSLVGGETAEMPGMYHGEDYDVAGFCVGVVEKSEIIDGSKVSDGDVLIALGSSGPHSNGYSLVRKILEVSGCDPQTTELDGKPLADHLLAPTRIYVKSVLELIEKVDVHAIAHLTGGGFWENIPRVLPDNTQAVIDESSWQWPEVFNWLQTAGNVERHEMYRTFNCGVGMIIALPAPEVDKALALLNANGENAWKIGIIKASDSEQRVVIE</sequence>